<proteinExistence type="inferred from homology"/>
<dbReference type="EC" id="4.2.1.17" evidence="1"/>
<dbReference type="EC" id="5.1.2.3" evidence="1"/>
<dbReference type="EC" id="1.1.1.35" evidence="1"/>
<dbReference type="EMBL" id="CP000720">
    <property type="protein sequence ID" value="ABS48861.1"/>
    <property type="molecule type" value="Genomic_DNA"/>
</dbReference>
<dbReference type="SMR" id="A7FGK1"/>
<dbReference type="KEGG" id="ypi:YpsIP31758_1400"/>
<dbReference type="HOGENOM" id="CLU_009834_16_1_6"/>
<dbReference type="UniPathway" id="UPA00659"/>
<dbReference type="Proteomes" id="UP000002412">
    <property type="component" value="Chromosome"/>
</dbReference>
<dbReference type="GO" id="GO:0005737">
    <property type="term" value="C:cytoplasm"/>
    <property type="evidence" value="ECO:0007669"/>
    <property type="project" value="UniProtKB-SubCell"/>
</dbReference>
<dbReference type="GO" id="GO:0008692">
    <property type="term" value="F:3-hydroxybutyryl-CoA epimerase activity"/>
    <property type="evidence" value="ECO:0007669"/>
    <property type="project" value="UniProtKB-UniRule"/>
</dbReference>
<dbReference type="GO" id="GO:0004300">
    <property type="term" value="F:enoyl-CoA hydratase activity"/>
    <property type="evidence" value="ECO:0007669"/>
    <property type="project" value="UniProtKB-UniRule"/>
</dbReference>
<dbReference type="GO" id="GO:0016509">
    <property type="term" value="F:long-chain-3-hydroxyacyl-CoA dehydrogenase activity"/>
    <property type="evidence" value="ECO:0007669"/>
    <property type="project" value="TreeGrafter"/>
</dbReference>
<dbReference type="GO" id="GO:0070403">
    <property type="term" value="F:NAD+ binding"/>
    <property type="evidence" value="ECO:0007669"/>
    <property type="project" value="InterPro"/>
</dbReference>
<dbReference type="GO" id="GO:0006635">
    <property type="term" value="P:fatty acid beta-oxidation"/>
    <property type="evidence" value="ECO:0007669"/>
    <property type="project" value="UniProtKB-UniRule"/>
</dbReference>
<dbReference type="CDD" id="cd06558">
    <property type="entry name" value="crotonase-like"/>
    <property type="match status" value="1"/>
</dbReference>
<dbReference type="FunFam" id="1.10.1040.50:FF:000003">
    <property type="entry name" value="Fatty acid oxidation complex subunit alpha"/>
    <property type="match status" value="1"/>
</dbReference>
<dbReference type="FunFam" id="3.90.226.10:FF:000011">
    <property type="entry name" value="Fatty acid oxidation complex subunit alpha"/>
    <property type="match status" value="1"/>
</dbReference>
<dbReference type="FunFam" id="3.40.50.720:FF:000009">
    <property type="entry name" value="Fatty oxidation complex, alpha subunit"/>
    <property type="match status" value="1"/>
</dbReference>
<dbReference type="Gene3D" id="1.10.1040.50">
    <property type="match status" value="1"/>
</dbReference>
<dbReference type="Gene3D" id="3.90.226.10">
    <property type="entry name" value="2-enoyl-CoA Hydratase, Chain A, domain 1"/>
    <property type="match status" value="1"/>
</dbReference>
<dbReference type="Gene3D" id="3.40.50.720">
    <property type="entry name" value="NAD(P)-binding Rossmann-like Domain"/>
    <property type="match status" value="1"/>
</dbReference>
<dbReference type="HAMAP" id="MF_01617">
    <property type="entry name" value="FadJ"/>
    <property type="match status" value="1"/>
</dbReference>
<dbReference type="InterPro" id="IPR006180">
    <property type="entry name" value="3-OHacyl-CoA_DH_CS"/>
</dbReference>
<dbReference type="InterPro" id="IPR006176">
    <property type="entry name" value="3-OHacyl-CoA_DH_NAD-bd"/>
</dbReference>
<dbReference type="InterPro" id="IPR006108">
    <property type="entry name" value="3HC_DH_C"/>
</dbReference>
<dbReference type="InterPro" id="IPR008927">
    <property type="entry name" value="6-PGluconate_DH-like_C_sf"/>
</dbReference>
<dbReference type="InterPro" id="IPR029045">
    <property type="entry name" value="ClpP/crotonase-like_dom_sf"/>
</dbReference>
<dbReference type="InterPro" id="IPR001753">
    <property type="entry name" value="Enoyl-CoA_hydra/iso"/>
</dbReference>
<dbReference type="InterPro" id="IPR050136">
    <property type="entry name" value="FA_oxidation_alpha_subunit"/>
</dbReference>
<dbReference type="InterPro" id="IPR012802">
    <property type="entry name" value="FadJ"/>
</dbReference>
<dbReference type="InterPro" id="IPR036291">
    <property type="entry name" value="NAD(P)-bd_dom_sf"/>
</dbReference>
<dbReference type="NCBIfam" id="TIGR02440">
    <property type="entry name" value="FadJ"/>
    <property type="match status" value="1"/>
</dbReference>
<dbReference type="NCBIfam" id="NF008363">
    <property type="entry name" value="PRK11154.1"/>
    <property type="match status" value="1"/>
</dbReference>
<dbReference type="PANTHER" id="PTHR43612">
    <property type="entry name" value="TRIFUNCTIONAL ENZYME SUBUNIT ALPHA"/>
    <property type="match status" value="1"/>
</dbReference>
<dbReference type="PANTHER" id="PTHR43612:SF3">
    <property type="entry name" value="TRIFUNCTIONAL ENZYME SUBUNIT ALPHA, MITOCHONDRIAL"/>
    <property type="match status" value="1"/>
</dbReference>
<dbReference type="Pfam" id="PF00725">
    <property type="entry name" value="3HCDH"/>
    <property type="match status" value="2"/>
</dbReference>
<dbReference type="Pfam" id="PF02737">
    <property type="entry name" value="3HCDH_N"/>
    <property type="match status" value="1"/>
</dbReference>
<dbReference type="Pfam" id="PF00378">
    <property type="entry name" value="ECH_1"/>
    <property type="match status" value="1"/>
</dbReference>
<dbReference type="SUPFAM" id="SSF48179">
    <property type="entry name" value="6-phosphogluconate dehydrogenase C-terminal domain-like"/>
    <property type="match status" value="2"/>
</dbReference>
<dbReference type="SUPFAM" id="SSF52096">
    <property type="entry name" value="ClpP/crotonase"/>
    <property type="match status" value="1"/>
</dbReference>
<dbReference type="SUPFAM" id="SSF51735">
    <property type="entry name" value="NAD(P)-binding Rossmann-fold domains"/>
    <property type="match status" value="1"/>
</dbReference>
<dbReference type="PROSITE" id="PS00067">
    <property type="entry name" value="3HCDH"/>
    <property type="match status" value="1"/>
</dbReference>
<protein>
    <recommendedName>
        <fullName evidence="1">Fatty acid oxidation complex subunit alpha</fullName>
    </recommendedName>
    <domain>
        <recommendedName>
            <fullName evidence="1">Enoyl-CoA hydratase/3-hydroxybutyryl-CoA epimerase</fullName>
            <ecNumber evidence="1">4.2.1.17</ecNumber>
            <ecNumber evidence="1">5.1.2.3</ecNumber>
        </recommendedName>
    </domain>
    <domain>
        <recommendedName>
            <fullName evidence="1">3-hydroxyacyl-CoA dehydrogenase</fullName>
            <ecNumber evidence="1">1.1.1.35</ecNumber>
        </recommendedName>
    </domain>
</protein>
<sequence length="747" mass="80695">MGASATNSVTHPAFTLNVRPDNIGIITIDVVGDKVNTLKAEFADQIATILQQAHALPKLQGLVIVSGKPDSFIAGADITMIAACRTAHDARVLAQKGQSILAQIAAFPVPVVAAIHGACLGGGLELALACHSRICSLDDKTVLGLPEVQLGLLPGSGGTQRLPRLVGVSKALDMILTGKQIRPRQALKMGLVDDVVPRDILLDVAIQRAKAGWLNRRALPWQERLLSGPLGKALLFRIVRKKTLAKTRGHYPAAERIIDVVRKGLDQGGPSGYEAEARAFGELAMSPQSAALRSLFFATTSLKKETGSAATARAIHRVGVLGGGLMGGGIANVTATRAGLPVRIKDINPQGINQALKYTWDALGKRVRSKRMRPTEQQRQMMLISGSTDYRGFERVDIVVEAVFEDLSLKQQMVADIERFGAAHTIFASNTSSLPISQIAALAQRPEQVIGLHYFSPVDKMPLVEVIPHEKTSEETIATTVALARKQGKTAIVVADRAGFYVNRILAPYINEAARCLLDGEPIESVDNALVDFGFPVGPMMLLDEVGIDVATKIMPILVEQLGPRFAAPPSFDVILKDGRKGRKNGRGFYLYSNPTKNSSPTKNGNSPAKRNSFKWRKNKVKPVDASIYTLLGVTPKAHLGAGVITQRCTMLMLNEAVRCLDESIIRNPRDGDIGAVFGIGFPPFLGGPFRYLDSLGADKVVQALRLLVQQYGERFEPCQRLVTMAEQQQQFYPVDANIDEVTDVAS</sequence>
<accession>A7FGK1</accession>
<keyword id="KW-0963">Cytoplasm</keyword>
<keyword id="KW-0276">Fatty acid metabolism</keyword>
<keyword id="KW-0413">Isomerase</keyword>
<keyword id="KW-0442">Lipid degradation</keyword>
<keyword id="KW-0443">Lipid metabolism</keyword>
<keyword id="KW-0456">Lyase</keyword>
<keyword id="KW-0511">Multifunctional enzyme</keyword>
<keyword id="KW-0520">NAD</keyword>
<keyword id="KW-0560">Oxidoreductase</keyword>
<gene>
    <name evidence="1" type="primary">fadJ</name>
    <name type="ordered locus">YpsIP31758_1400</name>
</gene>
<name>FADJ_YERP3</name>
<comment type="function">
    <text evidence="1">Catalyzes the formation of a hydroxyacyl-CoA by addition of water on enoyl-CoA. Also exhibits 3-hydroxyacyl-CoA epimerase and 3-hydroxyacyl-CoA dehydrogenase activities.</text>
</comment>
<comment type="catalytic activity">
    <reaction evidence="1">
        <text>a (3S)-3-hydroxyacyl-CoA = a (2E)-enoyl-CoA + H2O</text>
        <dbReference type="Rhea" id="RHEA:16105"/>
        <dbReference type="ChEBI" id="CHEBI:15377"/>
        <dbReference type="ChEBI" id="CHEBI:57318"/>
        <dbReference type="ChEBI" id="CHEBI:58856"/>
        <dbReference type="EC" id="4.2.1.17"/>
    </reaction>
</comment>
<comment type="catalytic activity">
    <reaction evidence="1">
        <text>a 4-saturated-(3S)-3-hydroxyacyl-CoA = a (3E)-enoyl-CoA + H2O</text>
        <dbReference type="Rhea" id="RHEA:20724"/>
        <dbReference type="ChEBI" id="CHEBI:15377"/>
        <dbReference type="ChEBI" id="CHEBI:58521"/>
        <dbReference type="ChEBI" id="CHEBI:137480"/>
        <dbReference type="EC" id="4.2.1.17"/>
    </reaction>
</comment>
<comment type="catalytic activity">
    <reaction evidence="1">
        <text>a (3S)-3-hydroxyacyl-CoA + NAD(+) = a 3-oxoacyl-CoA + NADH + H(+)</text>
        <dbReference type="Rhea" id="RHEA:22432"/>
        <dbReference type="ChEBI" id="CHEBI:15378"/>
        <dbReference type="ChEBI" id="CHEBI:57318"/>
        <dbReference type="ChEBI" id="CHEBI:57540"/>
        <dbReference type="ChEBI" id="CHEBI:57945"/>
        <dbReference type="ChEBI" id="CHEBI:90726"/>
        <dbReference type="EC" id="1.1.1.35"/>
    </reaction>
</comment>
<comment type="catalytic activity">
    <reaction evidence="1">
        <text>(3S)-3-hydroxybutanoyl-CoA = (3R)-3-hydroxybutanoyl-CoA</text>
        <dbReference type="Rhea" id="RHEA:21760"/>
        <dbReference type="ChEBI" id="CHEBI:57315"/>
        <dbReference type="ChEBI" id="CHEBI:57316"/>
        <dbReference type="EC" id="5.1.2.3"/>
    </reaction>
</comment>
<comment type="pathway">
    <text evidence="1">Lipid metabolism; fatty acid beta-oxidation.</text>
</comment>
<comment type="subunit">
    <text evidence="1">Heterotetramer of two alpha chains (FadJ) and two beta chains (FadI).</text>
</comment>
<comment type="subcellular location">
    <subcellularLocation>
        <location evidence="1">Cytoplasm</location>
    </subcellularLocation>
</comment>
<comment type="similarity">
    <text evidence="1">In the N-terminal section; belongs to the enoyl-CoA hydratase/isomerase family.</text>
</comment>
<comment type="similarity">
    <text evidence="1">In the central section; belongs to the 3-hydroxyacyl-CoA dehydrogenase family.</text>
</comment>
<feature type="chain" id="PRO_1000069491" description="Fatty acid oxidation complex subunit alpha">
    <location>
        <begin position="1"/>
        <end position="747"/>
    </location>
</feature>
<feature type="region of interest" description="Enoyl-CoA hydratase" evidence="1">
    <location>
        <begin position="1"/>
        <end position="197"/>
    </location>
</feature>
<feature type="region of interest" description="3-hydroxyacyl-CoA dehydrogenase" evidence="1">
    <location>
        <begin position="313"/>
        <end position="747"/>
    </location>
</feature>
<feature type="region of interest" description="Disordered" evidence="2">
    <location>
        <begin position="590"/>
        <end position="614"/>
    </location>
</feature>
<feature type="compositionally biased region" description="Polar residues" evidence="2">
    <location>
        <begin position="593"/>
        <end position="610"/>
    </location>
</feature>
<feature type="site" description="Important for catalytic activity" evidence="1">
    <location>
        <position position="125"/>
    </location>
</feature>
<feature type="site" description="Important for catalytic activity" evidence="1">
    <location>
        <position position="147"/>
    </location>
</feature>
<evidence type="ECO:0000255" key="1">
    <source>
        <dbReference type="HAMAP-Rule" id="MF_01617"/>
    </source>
</evidence>
<evidence type="ECO:0000256" key="2">
    <source>
        <dbReference type="SAM" id="MobiDB-lite"/>
    </source>
</evidence>
<reference key="1">
    <citation type="journal article" date="2007" name="PLoS Genet.">
        <title>The complete genome sequence of Yersinia pseudotuberculosis IP31758, the causative agent of Far East scarlet-like fever.</title>
        <authorList>
            <person name="Eppinger M."/>
            <person name="Rosovitz M.J."/>
            <person name="Fricke W.F."/>
            <person name="Rasko D.A."/>
            <person name="Kokorina G."/>
            <person name="Fayolle C."/>
            <person name="Lindler L.E."/>
            <person name="Carniel E."/>
            <person name="Ravel J."/>
        </authorList>
    </citation>
    <scope>NUCLEOTIDE SEQUENCE [LARGE SCALE GENOMIC DNA]</scope>
    <source>
        <strain>IP 31758</strain>
    </source>
</reference>
<organism>
    <name type="scientific">Yersinia pseudotuberculosis serotype O:1b (strain IP 31758)</name>
    <dbReference type="NCBI Taxonomy" id="349747"/>
    <lineage>
        <taxon>Bacteria</taxon>
        <taxon>Pseudomonadati</taxon>
        <taxon>Pseudomonadota</taxon>
        <taxon>Gammaproteobacteria</taxon>
        <taxon>Enterobacterales</taxon>
        <taxon>Yersiniaceae</taxon>
        <taxon>Yersinia</taxon>
    </lineage>
</organism>